<feature type="chain" id="PRO_0000235714" description="Ribonuclease HII">
    <location>
        <begin position="1"/>
        <end position="208"/>
    </location>
</feature>
<feature type="domain" description="RNase H type-2" evidence="2">
    <location>
        <begin position="11"/>
        <end position="203"/>
    </location>
</feature>
<feature type="binding site" evidence="1">
    <location>
        <position position="17"/>
    </location>
    <ligand>
        <name>a divalent metal cation</name>
        <dbReference type="ChEBI" id="CHEBI:60240"/>
    </ligand>
</feature>
<feature type="binding site" evidence="1">
    <location>
        <position position="18"/>
    </location>
    <ligand>
        <name>a divalent metal cation</name>
        <dbReference type="ChEBI" id="CHEBI:60240"/>
    </ligand>
</feature>
<feature type="binding site" evidence="1">
    <location>
        <position position="112"/>
    </location>
    <ligand>
        <name>a divalent metal cation</name>
        <dbReference type="ChEBI" id="CHEBI:60240"/>
    </ligand>
</feature>
<dbReference type="EC" id="3.1.26.4" evidence="1"/>
<dbReference type="EMBL" id="CR931997">
    <property type="protein sequence ID" value="CAI37346.1"/>
    <property type="molecule type" value="Genomic_DNA"/>
</dbReference>
<dbReference type="RefSeq" id="WP_005295298.1">
    <property type="nucleotide sequence ID" value="NC_007164.1"/>
</dbReference>
<dbReference type="SMR" id="Q4JV11"/>
<dbReference type="STRING" id="306537.jk1182"/>
<dbReference type="GeneID" id="92738701"/>
<dbReference type="KEGG" id="cjk:jk1182"/>
<dbReference type="eggNOG" id="COG0164">
    <property type="taxonomic scope" value="Bacteria"/>
</dbReference>
<dbReference type="HOGENOM" id="CLU_036532_1_0_11"/>
<dbReference type="OrthoDB" id="9803420at2"/>
<dbReference type="Proteomes" id="UP000000545">
    <property type="component" value="Chromosome"/>
</dbReference>
<dbReference type="GO" id="GO:0005737">
    <property type="term" value="C:cytoplasm"/>
    <property type="evidence" value="ECO:0007669"/>
    <property type="project" value="UniProtKB-SubCell"/>
</dbReference>
<dbReference type="GO" id="GO:0032299">
    <property type="term" value="C:ribonuclease H2 complex"/>
    <property type="evidence" value="ECO:0007669"/>
    <property type="project" value="TreeGrafter"/>
</dbReference>
<dbReference type="GO" id="GO:0030145">
    <property type="term" value="F:manganese ion binding"/>
    <property type="evidence" value="ECO:0007669"/>
    <property type="project" value="UniProtKB-UniRule"/>
</dbReference>
<dbReference type="GO" id="GO:0003723">
    <property type="term" value="F:RNA binding"/>
    <property type="evidence" value="ECO:0007669"/>
    <property type="project" value="InterPro"/>
</dbReference>
<dbReference type="GO" id="GO:0004523">
    <property type="term" value="F:RNA-DNA hybrid ribonuclease activity"/>
    <property type="evidence" value="ECO:0007669"/>
    <property type="project" value="UniProtKB-UniRule"/>
</dbReference>
<dbReference type="GO" id="GO:0043137">
    <property type="term" value="P:DNA replication, removal of RNA primer"/>
    <property type="evidence" value="ECO:0007669"/>
    <property type="project" value="TreeGrafter"/>
</dbReference>
<dbReference type="GO" id="GO:0006298">
    <property type="term" value="P:mismatch repair"/>
    <property type="evidence" value="ECO:0007669"/>
    <property type="project" value="TreeGrafter"/>
</dbReference>
<dbReference type="CDD" id="cd07182">
    <property type="entry name" value="RNase_HII_bacteria_HII_like"/>
    <property type="match status" value="1"/>
</dbReference>
<dbReference type="Gene3D" id="3.30.420.10">
    <property type="entry name" value="Ribonuclease H-like superfamily/Ribonuclease H"/>
    <property type="match status" value="1"/>
</dbReference>
<dbReference type="HAMAP" id="MF_00052_B">
    <property type="entry name" value="RNase_HII_B"/>
    <property type="match status" value="1"/>
</dbReference>
<dbReference type="InterPro" id="IPR022898">
    <property type="entry name" value="RNase_HII"/>
</dbReference>
<dbReference type="InterPro" id="IPR001352">
    <property type="entry name" value="RNase_HII/HIII"/>
</dbReference>
<dbReference type="InterPro" id="IPR024567">
    <property type="entry name" value="RNase_HII/HIII_dom"/>
</dbReference>
<dbReference type="InterPro" id="IPR012337">
    <property type="entry name" value="RNaseH-like_sf"/>
</dbReference>
<dbReference type="InterPro" id="IPR036397">
    <property type="entry name" value="RNaseH_sf"/>
</dbReference>
<dbReference type="NCBIfam" id="NF000595">
    <property type="entry name" value="PRK00015.1-3"/>
    <property type="match status" value="1"/>
</dbReference>
<dbReference type="NCBIfam" id="NF000598">
    <property type="entry name" value="PRK00015.2-2"/>
    <property type="match status" value="1"/>
</dbReference>
<dbReference type="PANTHER" id="PTHR10954">
    <property type="entry name" value="RIBONUCLEASE H2 SUBUNIT A"/>
    <property type="match status" value="1"/>
</dbReference>
<dbReference type="PANTHER" id="PTHR10954:SF18">
    <property type="entry name" value="RIBONUCLEASE HII"/>
    <property type="match status" value="1"/>
</dbReference>
<dbReference type="Pfam" id="PF01351">
    <property type="entry name" value="RNase_HII"/>
    <property type="match status" value="1"/>
</dbReference>
<dbReference type="SUPFAM" id="SSF53098">
    <property type="entry name" value="Ribonuclease H-like"/>
    <property type="match status" value="1"/>
</dbReference>
<dbReference type="PROSITE" id="PS51975">
    <property type="entry name" value="RNASE_H_2"/>
    <property type="match status" value="1"/>
</dbReference>
<name>RNH2_CORJK</name>
<comment type="function">
    <text evidence="1">Endonuclease that specifically degrades the RNA of RNA-DNA hybrids.</text>
</comment>
<comment type="catalytic activity">
    <reaction evidence="1">
        <text>Endonucleolytic cleavage to 5'-phosphomonoester.</text>
        <dbReference type="EC" id="3.1.26.4"/>
    </reaction>
</comment>
<comment type="cofactor">
    <cofactor evidence="1">
        <name>Mn(2+)</name>
        <dbReference type="ChEBI" id="CHEBI:29035"/>
    </cofactor>
    <cofactor evidence="1">
        <name>Mg(2+)</name>
        <dbReference type="ChEBI" id="CHEBI:18420"/>
    </cofactor>
    <text evidence="1">Manganese or magnesium. Binds 1 divalent metal ion per monomer in the absence of substrate. May bind a second metal ion after substrate binding.</text>
</comment>
<comment type="subcellular location">
    <subcellularLocation>
        <location evidence="1">Cytoplasm</location>
    </subcellularLocation>
</comment>
<comment type="similarity">
    <text evidence="1">Belongs to the RNase HII family.</text>
</comment>
<accession>Q4JV11</accession>
<organism>
    <name type="scientific">Corynebacterium jeikeium (strain K411)</name>
    <dbReference type="NCBI Taxonomy" id="306537"/>
    <lineage>
        <taxon>Bacteria</taxon>
        <taxon>Bacillati</taxon>
        <taxon>Actinomycetota</taxon>
        <taxon>Actinomycetes</taxon>
        <taxon>Mycobacteriales</taxon>
        <taxon>Corynebacteriaceae</taxon>
        <taxon>Corynebacterium</taxon>
    </lineage>
</organism>
<gene>
    <name evidence="1" type="primary">rnhB</name>
    <name type="ordered locus">jk1182</name>
</gene>
<keyword id="KW-0963">Cytoplasm</keyword>
<keyword id="KW-0255">Endonuclease</keyword>
<keyword id="KW-0378">Hydrolase</keyword>
<keyword id="KW-0464">Manganese</keyword>
<keyword id="KW-0479">Metal-binding</keyword>
<keyword id="KW-0540">Nuclease</keyword>
<keyword id="KW-1185">Reference proteome</keyword>
<proteinExistence type="inferred from homology"/>
<sequence length="208" mass="22337">MERELESAGLGPVAGVDEAGRGACCGPISIAACILPSDLDGVGLDRLTDSKKLTEKTRERLYDVIRDVAVSYSIIHISAEDIDRFGIQHANVSGMRRAVAALDVQPGYVLTDAVKVPGLPMPHLPVVKGDQMAKCISAASVLAKVSRDRVLRTLDEEFPGYGLASHKGYGTKAHMTAVSLHGGTPYHRYSYKNVAAAHEQWLKGKDRG</sequence>
<reference key="1">
    <citation type="journal article" date="2005" name="J. Bacteriol.">
        <title>Complete genome sequence and analysis of the multiresistant nosocomial pathogen Corynebacterium jeikeium K411, a lipid-requiring bacterium of the human skin flora.</title>
        <authorList>
            <person name="Tauch A."/>
            <person name="Kaiser O."/>
            <person name="Hain T."/>
            <person name="Goesmann A."/>
            <person name="Weisshaar B."/>
            <person name="Albersmeier A."/>
            <person name="Bekel T."/>
            <person name="Bischoff N."/>
            <person name="Brune I."/>
            <person name="Chakraborty T."/>
            <person name="Kalinowski J."/>
            <person name="Meyer F."/>
            <person name="Rupp O."/>
            <person name="Schneiker S."/>
            <person name="Viehoever P."/>
            <person name="Puehler A."/>
        </authorList>
    </citation>
    <scope>NUCLEOTIDE SEQUENCE [LARGE SCALE GENOMIC DNA]</scope>
    <source>
        <strain>K411</strain>
    </source>
</reference>
<evidence type="ECO:0000255" key="1">
    <source>
        <dbReference type="HAMAP-Rule" id="MF_00052"/>
    </source>
</evidence>
<evidence type="ECO:0000255" key="2">
    <source>
        <dbReference type="PROSITE-ProRule" id="PRU01319"/>
    </source>
</evidence>
<protein>
    <recommendedName>
        <fullName evidence="1">Ribonuclease HII</fullName>
        <shortName evidence="1">RNase HII</shortName>
        <ecNumber evidence="1">3.1.26.4</ecNumber>
    </recommendedName>
</protein>